<gene>
    <name type="primary">snrpb2</name>
    <name type="ORF">DDB_G0288391</name>
</gene>
<dbReference type="EMBL" id="AAFI02000111">
    <property type="protein sequence ID" value="EAL63221.1"/>
    <property type="molecule type" value="Genomic_DNA"/>
</dbReference>
<dbReference type="RefSeq" id="XP_636725.1">
    <property type="nucleotide sequence ID" value="XM_631633.1"/>
</dbReference>
<dbReference type="SMR" id="Q54J05"/>
<dbReference type="FunCoup" id="Q54J05">
    <property type="interactions" value="944"/>
</dbReference>
<dbReference type="STRING" id="44689.Q54J05"/>
<dbReference type="PaxDb" id="44689-DDB0233135"/>
<dbReference type="EnsemblProtists" id="EAL63221">
    <property type="protein sequence ID" value="EAL63221"/>
    <property type="gene ID" value="DDB_G0288391"/>
</dbReference>
<dbReference type="GeneID" id="8626602"/>
<dbReference type="KEGG" id="ddi:DDB_G0288391"/>
<dbReference type="dictyBase" id="DDB_G0288391">
    <property type="gene designation" value="snrpB2"/>
</dbReference>
<dbReference type="VEuPathDB" id="AmoebaDB:DDB_G0288391"/>
<dbReference type="eggNOG" id="KOG4206">
    <property type="taxonomic scope" value="Eukaryota"/>
</dbReference>
<dbReference type="HOGENOM" id="CLU_041869_1_1_1"/>
<dbReference type="InParanoid" id="Q54J05"/>
<dbReference type="OMA" id="LKKGWVM"/>
<dbReference type="PhylomeDB" id="Q54J05"/>
<dbReference type="Reactome" id="R-DDI-72163">
    <property type="pathway name" value="mRNA Splicing - Major Pathway"/>
</dbReference>
<dbReference type="PRO" id="PR:Q54J05"/>
<dbReference type="Proteomes" id="UP000002195">
    <property type="component" value="Chromosome 5"/>
</dbReference>
<dbReference type="GO" id="GO:0005681">
    <property type="term" value="C:spliceosomal complex"/>
    <property type="evidence" value="ECO:0007669"/>
    <property type="project" value="UniProtKB-KW"/>
</dbReference>
<dbReference type="GO" id="GO:0005685">
    <property type="term" value="C:U1 snRNP"/>
    <property type="evidence" value="ECO:0000318"/>
    <property type="project" value="GO_Central"/>
</dbReference>
<dbReference type="GO" id="GO:0030619">
    <property type="term" value="F:U1 snRNA binding"/>
    <property type="evidence" value="ECO:0000318"/>
    <property type="project" value="GO_Central"/>
</dbReference>
<dbReference type="GO" id="GO:0000398">
    <property type="term" value="P:mRNA splicing, via spliceosome"/>
    <property type="evidence" value="ECO:0000318"/>
    <property type="project" value="GO_Central"/>
</dbReference>
<dbReference type="CDD" id="cd12246">
    <property type="entry name" value="RRM1_U1A_like"/>
    <property type="match status" value="1"/>
</dbReference>
<dbReference type="CDD" id="cd12247">
    <property type="entry name" value="RRM2_U1A_like"/>
    <property type="match status" value="1"/>
</dbReference>
<dbReference type="FunFam" id="3.30.70.330:FF:000039">
    <property type="entry name" value="U1 small nuclear ribonucleoprotein A"/>
    <property type="match status" value="1"/>
</dbReference>
<dbReference type="FunFam" id="3.30.70.330:FF:000029">
    <property type="entry name" value="U2 small nuclear ribonucleoprotein B"/>
    <property type="match status" value="1"/>
</dbReference>
<dbReference type="Gene3D" id="3.30.70.330">
    <property type="match status" value="2"/>
</dbReference>
<dbReference type="InterPro" id="IPR012677">
    <property type="entry name" value="Nucleotide-bd_a/b_plait_sf"/>
</dbReference>
<dbReference type="InterPro" id="IPR035979">
    <property type="entry name" value="RBD_domain_sf"/>
</dbReference>
<dbReference type="InterPro" id="IPR000504">
    <property type="entry name" value="RRM_dom"/>
</dbReference>
<dbReference type="PANTHER" id="PTHR10501">
    <property type="entry name" value="U1 SMALL NUCLEAR RIBONUCLEOPROTEIN A/U2 SMALL NUCLEAR RIBONUCLEOPROTEIN B"/>
    <property type="match status" value="1"/>
</dbReference>
<dbReference type="Pfam" id="PF00076">
    <property type="entry name" value="RRM_1"/>
    <property type="match status" value="2"/>
</dbReference>
<dbReference type="SMART" id="SM00360">
    <property type="entry name" value="RRM"/>
    <property type="match status" value="2"/>
</dbReference>
<dbReference type="SUPFAM" id="SSF54928">
    <property type="entry name" value="RNA-binding domain, RBD"/>
    <property type="match status" value="1"/>
</dbReference>
<dbReference type="PROSITE" id="PS50102">
    <property type="entry name" value="RRM"/>
    <property type="match status" value="2"/>
</dbReference>
<accession>Q54J05</accession>
<comment type="function">
    <text evidence="1">Involved in pre-mRNA splicing as component of the spliceosome. Associated with sn-RNP U2, where it contributes to the binding of stem loop IV of U2 snRNA.</text>
</comment>
<comment type="subunit">
    <text evidence="1">Identified in the spliceosome B complex. Identified in the spliceosome C complex.</text>
</comment>
<comment type="subcellular location">
    <subcellularLocation>
        <location evidence="1">Nucleus</location>
    </subcellularLocation>
</comment>
<comment type="similarity">
    <text evidence="4">Belongs to the RRM U1 A/B'' family.</text>
</comment>
<reference key="1">
    <citation type="journal article" date="2005" name="Nature">
        <title>The genome of the social amoeba Dictyostelium discoideum.</title>
        <authorList>
            <person name="Eichinger L."/>
            <person name="Pachebat J.A."/>
            <person name="Gloeckner G."/>
            <person name="Rajandream M.A."/>
            <person name="Sucgang R."/>
            <person name="Berriman M."/>
            <person name="Song J."/>
            <person name="Olsen R."/>
            <person name="Szafranski K."/>
            <person name="Xu Q."/>
            <person name="Tunggal B."/>
            <person name="Kummerfeld S."/>
            <person name="Madera M."/>
            <person name="Konfortov B.A."/>
            <person name="Rivero F."/>
            <person name="Bankier A.T."/>
            <person name="Lehmann R."/>
            <person name="Hamlin N."/>
            <person name="Davies R."/>
            <person name="Gaudet P."/>
            <person name="Fey P."/>
            <person name="Pilcher K."/>
            <person name="Chen G."/>
            <person name="Saunders D."/>
            <person name="Sodergren E.J."/>
            <person name="Davis P."/>
            <person name="Kerhornou A."/>
            <person name="Nie X."/>
            <person name="Hall N."/>
            <person name="Anjard C."/>
            <person name="Hemphill L."/>
            <person name="Bason N."/>
            <person name="Farbrother P."/>
            <person name="Desany B."/>
            <person name="Just E."/>
            <person name="Morio T."/>
            <person name="Rost R."/>
            <person name="Churcher C.M."/>
            <person name="Cooper J."/>
            <person name="Haydock S."/>
            <person name="van Driessche N."/>
            <person name="Cronin A."/>
            <person name="Goodhead I."/>
            <person name="Muzny D.M."/>
            <person name="Mourier T."/>
            <person name="Pain A."/>
            <person name="Lu M."/>
            <person name="Harper D."/>
            <person name="Lindsay R."/>
            <person name="Hauser H."/>
            <person name="James K.D."/>
            <person name="Quiles M."/>
            <person name="Madan Babu M."/>
            <person name="Saito T."/>
            <person name="Buchrieser C."/>
            <person name="Wardroper A."/>
            <person name="Felder M."/>
            <person name="Thangavelu M."/>
            <person name="Johnson D."/>
            <person name="Knights A."/>
            <person name="Loulseged H."/>
            <person name="Mungall K.L."/>
            <person name="Oliver K."/>
            <person name="Price C."/>
            <person name="Quail M.A."/>
            <person name="Urushihara H."/>
            <person name="Hernandez J."/>
            <person name="Rabbinowitsch E."/>
            <person name="Steffen D."/>
            <person name="Sanders M."/>
            <person name="Ma J."/>
            <person name="Kohara Y."/>
            <person name="Sharp S."/>
            <person name="Simmonds M.N."/>
            <person name="Spiegler S."/>
            <person name="Tivey A."/>
            <person name="Sugano S."/>
            <person name="White B."/>
            <person name="Walker D."/>
            <person name="Woodward J.R."/>
            <person name="Winckler T."/>
            <person name="Tanaka Y."/>
            <person name="Shaulsky G."/>
            <person name="Schleicher M."/>
            <person name="Weinstock G.M."/>
            <person name="Rosenthal A."/>
            <person name="Cox E.C."/>
            <person name="Chisholm R.L."/>
            <person name="Gibbs R.A."/>
            <person name="Loomis W.F."/>
            <person name="Platzer M."/>
            <person name="Kay R.R."/>
            <person name="Williams J.G."/>
            <person name="Dear P.H."/>
            <person name="Noegel A.A."/>
            <person name="Barrell B.G."/>
            <person name="Kuspa A."/>
        </authorList>
    </citation>
    <scope>NUCLEOTIDE SEQUENCE [LARGE SCALE GENOMIC DNA]</scope>
    <source>
        <strain>AX4</strain>
    </source>
</reference>
<protein>
    <recommendedName>
        <fullName>U2 small nuclear ribonucleoprotein B''</fullName>
        <shortName>U2 snRNP B''</shortName>
    </recommendedName>
</protein>
<keyword id="KW-0507">mRNA processing</keyword>
<keyword id="KW-0508">mRNA splicing</keyword>
<keyword id="KW-0539">Nucleus</keyword>
<keyword id="KW-1185">Reference proteome</keyword>
<keyword id="KW-0677">Repeat</keyword>
<keyword id="KW-0687">Ribonucleoprotein</keyword>
<keyword id="KW-0694">RNA-binding</keyword>
<keyword id="KW-0747">Spliceosome</keyword>
<proteinExistence type="inferred from homology"/>
<evidence type="ECO:0000250" key="1">
    <source>
        <dbReference type="UniProtKB" id="P08579"/>
    </source>
</evidence>
<evidence type="ECO:0000255" key="2">
    <source>
        <dbReference type="PROSITE-ProRule" id="PRU00176"/>
    </source>
</evidence>
<evidence type="ECO:0000256" key="3">
    <source>
        <dbReference type="SAM" id="MobiDB-lite"/>
    </source>
</evidence>
<evidence type="ECO:0000305" key="4"/>
<organism>
    <name type="scientific">Dictyostelium discoideum</name>
    <name type="common">Social amoeba</name>
    <dbReference type="NCBI Taxonomy" id="44689"/>
    <lineage>
        <taxon>Eukaryota</taxon>
        <taxon>Amoebozoa</taxon>
        <taxon>Evosea</taxon>
        <taxon>Eumycetozoa</taxon>
        <taxon>Dictyostelia</taxon>
        <taxon>Dictyosteliales</taxon>
        <taxon>Dictyosteliaceae</taxon>
        <taxon>Dictyostelium</taxon>
    </lineage>
</organism>
<feature type="chain" id="PRO_0000327959" description="U2 small nuclear ribonucleoprotein B''">
    <location>
        <begin position="1"/>
        <end position="241"/>
    </location>
</feature>
<feature type="domain" description="RRM 1" evidence="2">
    <location>
        <begin position="12"/>
        <end position="91"/>
    </location>
</feature>
<feature type="domain" description="RRM 2" evidence="2">
    <location>
        <begin position="167"/>
        <end position="241"/>
    </location>
</feature>
<feature type="region of interest" description="Disordered" evidence="3">
    <location>
        <begin position="99"/>
        <end position="169"/>
    </location>
</feature>
<feature type="compositionally biased region" description="Basic and acidic residues" evidence="3">
    <location>
        <begin position="99"/>
        <end position="126"/>
    </location>
</feature>
<feature type="compositionally biased region" description="Low complexity" evidence="3">
    <location>
        <begin position="129"/>
        <end position="152"/>
    </location>
</feature>
<sequence length="241" mass="27302">METESADIPPNQTLYVNNLYEKISKKKLIEQLLLLFSKYGPILEIVGSKSLKMRGQAFIVFKDITSASNALREMNGFNFLDRPMKIQYCKSKSDAVSKLDGTYMEKKREREENDKKGSNKKQDRKSTGQQQQQQKRPGAPTSTTSTTSPTTSNGTVSLQPRDDPPNKTLFVENLPDKCDSMMLSMLFSQFQGFKEVHMVESKKGIAFIEFEDEIKSGFAMTNLQHFKVTPEKPMVVSFAAQ</sequence>
<name>RU2B_DICDI</name>